<comment type="function">
    <text evidence="1 2">Transfers an acetyl group from acetyl-CoA to L-homoserine, forming acetyl-L-homoserine.</text>
</comment>
<comment type="catalytic activity">
    <reaction evidence="1 2">
        <text>L-homoserine + acetyl-CoA = O-acetyl-L-homoserine + CoA</text>
        <dbReference type="Rhea" id="RHEA:13701"/>
        <dbReference type="ChEBI" id="CHEBI:57287"/>
        <dbReference type="ChEBI" id="CHEBI:57288"/>
        <dbReference type="ChEBI" id="CHEBI:57476"/>
        <dbReference type="ChEBI" id="CHEBI:57716"/>
        <dbReference type="EC" id="2.3.1.31"/>
    </reaction>
</comment>
<comment type="pathway">
    <text evidence="1">Amino-acid biosynthesis; L-methionine biosynthesis via de novo pathway; O-acetyl-L-homoserine from L-homoserine: step 1/1.</text>
</comment>
<comment type="subcellular location">
    <subcellularLocation>
        <location evidence="1">Cytoplasm</location>
    </subcellularLocation>
</comment>
<comment type="similarity">
    <text evidence="1">Belongs to the MetA family.</text>
</comment>
<sequence length="305" mass="35171">MPITLPATLPAFDVLTHEGVMVMTPERAARQDIRPLRIGLLNLMPKKIQTENQFARLIGATPLQIDFQLIRMTEHQTKNTAAEHMEAFYRPFQEVKHEKFDGLIITGAPIEHLDFADVTYWDELCEVMDWTQTNVQSTFGVCWGGMAMIYHFHRVQKHRLQAKAFGCFRHRNVAPTSPYLRGFSDDFVIPVSRWTEMRQAEIDAAPGLRTLLASDEAGPCLVEDPGHRALYIFNHFEYDSDTLKQEYDRDVANGKPINVPANYYPDDDPSKPPLNRWRSHAHLLYGNWINEIYQSTPYDPQQIGR</sequence>
<proteinExistence type="evidence at protein level"/>
<reference key="1">
    <citation type="submission" date="2005-09" db="EMBL/GenBank/DDBJ databases">
        <title>Complete sequence of chromosome 1 of Rhodobacter sphaeroides 2.4.1.</title>
        <authorList>
            <person name="Copeland A."/>
            <person name="Lucas S."/>
            <person name="Lapidus A."/>
            <person name="Barry K."/>
            <person name="Detter J.C."/>
            <person name="Glavina T."/>
            <person name="Hammon N."/>
            <person name="Israni S."/>
            <person name="Pitluck S."/>
            <person name="Richardson P."/>
            <person name="Mackenzie C."/>
            <person name="Choudhary M."/>
            <person name="Larimer F."/>
            <person name="Hauser L.J."/>
            <person name="Land M."/>
            <person name="Donohue T.J."/>
            <person name="Kaplan S."/>
        </authorList>
    </citation>
    <scope>NUCLEOTIDE SEQUENCE [LARGE SCALE GENOMIC DNA]</scope>
    <source>
        <strain>ATCC 17023 / DSM 158 / JCM 6121 / CCUG 31486 / LMG 2827 / NBRC 12203 / NCIMB 8253 / ATH 2.4.1.</strain>
    </source>
</reference>
<reference key="2">
    <citation type="journal article" date="2017" name="Nat. Chem. Biol.">
        <title>Parallel evolution of non-homologous isofunctional enzymes in methionine biosynthesis.</title>
        <authorList>
            <person name="Bastard K."/>
            <person name="Perret A."/>
            <person name="Mariage A."/>
            <person name="Bessonnet T."/>
            <person name="Pinet-Turpault A."/>
            <person name="Petit J.L."/>
            <person name="Darii E."/>
            <person name="Bazire P."/>
            <person name="Vergne-Vaxelaire C."/>
            <person name="Brewee C."/>
            <person name="Debard A."/>
            <person name="Pellouin V."/>
            <person name="Besnard-Gonnet M."/>
            <person name="Artiguenave F."/>
            <person name="Medigue C."/>
            <person name="Vallenet D."/>
            <person name="Danchin A."/>
            <person name="Zaparucha A."/>
            <person name="Weissenbach J."/>
            <person name="Salanoubat M."/>
            <person name="de Berardinis V."/>
        </authorList>
    </citation>
    <scope>FUNCTION</scope>
    <scope>CATALYTIC ACTIVITY</scope>
</reference>
<feature type="chain" id="PRO_1000021827" description="Homoserine O-acetyltransferase">
    <location>
        <begin position="1"/>
        <end position="305"/>
    </location>
</feature>
<feature type="active site" description="Acyl-thioester intermediate" evidence="1">
    <location>
        <position position="142"/>
    </location>
</feature>
<feature type="active site" description="Proton acceptor" evidence="1">
    <location>
        <position position="235"/>
    </location>
</feature>
<feature type="active site" evidence="1">
    <location>
        <position position="237"/>
    </location>
</feature>
<feature type="binding site" evidence="1">
    <location>
        <position position="163"/>
    </location>
    <ligand>
        <name>substrate</name>
    </ligand>
</feature>
<feature type="binding site" evidence="1">
    <location>
        <position position="192"/>
    </location>
    <ligand>
        <name>substrate</name>
    </ligand>
</feature>
<feature type="binding site" evidence="1">
    <location>
        <position position="249"/>
    </location>
    <ligand>
        <name>substrate</name>
    </ligand>
</feature>
<feature type="site" description="Important for acyl-CoA specificity" evidence="1">
    <location>
        <position position="111"/>
    </location>
</feature>
<feature type="site" description="Important for substrate specificity" evidence="1">
    <location>
        <position position="192"/>
    </location>
</feature>
<gene>
    <name evidence="1 3" type="primary">metAA</name>
    <name type="ordered locus">RHOS4_16110</name>
    <name type="ORF">RSP_0010</name>
</gene>
<dbReference type="EC" id="2.3.1.31" evidence="1 2"/>
<dbReference type="EMBL" id="CP000143">
    <property type="protein sequence ID" value="ABA79179.1"/>
    <property type="molecule type" value="Genomic_DNA"/>
</dbReference>
<dbReference type="RefSeq" id="YP_353080.1">
    <property type="nucleotide sequence ID" value="NC_007493.2"/>
</dbReference>
<dbReference type="SMR" id="Q3J205"/>
<dbReference type="STRING" id="272943.RSP_0010"/>
<dbReference type="EnsemblBacteria" id="ABA79179">
    <property type="protein sequence ID" value="ABA79179"/>
    <property type="gene ID" value="RSP_0010"/>
</dbReference>
<dbReference type="KEGG" id="rsp:RSP_0010"/>
<dbReference type="PATRIC" id="fig|272943.9.peg.1941"/>
<dbReference type="eggNOG" id="COG1897">
    <property type="taxonomic scope" value="Bacteria"/>
</dbReference>
<dbReference type="OrthoDB" id="9772423at2"/>
<dbReference type="PhylomeDB" id="Q3J205"/>
<dbReference type="UniPathway" id="UPA00051">
    <property type="reaction ID" value="UER00074"/>
</dbReference>
<dbReference type="Proteomes" id="UP000002703">
    <property type="component" value="Chromosome 1"/>
</dbReference>
<dbReference type="GO" id="GO:0005737">
    <property type="term" value="C:cytoplasm"/>
    <property type="evidence" value="ECO:0007669"/>
    <property type="project" value="UniProtKB-SubCell"/>
</dbReference>
<dbReference type="GO" id="GO:0004414">
    <property type="term" value="F:homoserine O-acetyltransferase activity"/>
    <property type="evidence" value="ECO:0007669"/>
    <property type="project" value="UniProtKB-EC"/>
</dbReference>
<dbReference type="GO" id="GO:0008899">
    <property type="term" value="F:homoserine O-succinyltransferase activity"/>
    <property type="evidence" value="ECO:0007669"/>
    <property type="project" value="UniProtKB-UniRule"/>
</dbReference>
<dbReference type="GO" id="GO:0019281">
    <property type="term" value="P:L-methionine biosynthetic process from homoserine via O-succinyl-L-homoserine and cystathionine"/>
    <property type="evidence" value="ECO:0007669"/>
    <property type="project" value="InterPro"/>
</dbReference>
<dbReference type="CDD" id="cd03131">
    <property type="entry name" value="GATase1_HTS"/>
    <property type="match status" value="1"/>
</dbReference>
<dbReference type="Gene3D" id="3.40.50.880">
    <property type="match status" value="1"/>
</dbReference>
<dbReference type="HAMAP" id="MF_00295">
    <property type="entry name" value="MetA_acyltransf"/>
    <property type="match status" value="1"/>
</dbReference>
<dbReference type="InterPro" id="IPR029062">
    <property type="entry name" value="Class_I_gatase-like"/>
</dbReference>
<dbReference type="InterPro" id="IPR005697">
    <property type="entry name" value="HST_MetA"/>
</dbReference>
<dbReference type="InterPro" id="IPR033752">
    <property type="entry name" value="MetA_family"/>
</dbReference>
<dbReference type="NCBIfam" id="TIGR01001">
    <property type="entry name" value="metA"/>
    <property type="match status" value="1"/>
</dbReference>
<dbReference type="PANTHER" id="PTHR20919">
    <property type="entry name" value="HOMOSERINE O-SUCCINYLTRANSFERASE"/>
    <property type="match status" value="1"/>
</dbReference>
<dbReference type="PANTHER" id="PTHR20919:SF0">
    <property type="entry name" value="HOMOSERINE O-SUCCINYLTRANSFERASE"/>
    <property type="match status" value="1"/>
</dbReference>
<dbReference type="Pfam" id="PF04204">
    <property type="entry name" value="HTS"/>
    <property type="match status" value="1"/>
</dbReference>
<dbReference type="PIRSF" id="PIRSF000450">
    <property type="entry name" value="H_ser_succinyltr"/>
    <property type="match status" value="1"/>
</dbReference>
<dbReference type="SUPFAM" id="SSF52317">
    <property type="entry name" value="Class I glutamine amidotransferase-like"/>
    <property type="match status" value="1"/>
</dbReference>
<organism>
    <name type="scientific">Cereibacter sphaeroides (strain ATCC 17023 / DSM 158 / JCM 6121 / CCUG 31486 / LMG 2827 / NBRC 12203 / NCIMB 8253 / ATH 2.4.1.)</name>
    <name type="common">Rhodobacter sphaeroides</name>
    <dbReference type="NCBI Taxonomy" id="272943"/>
    <lineage>
        <taxon>Bacteria</taxon>
        <taxon>Pseudomonadati</taxon>
        <taxon>Pseudomonadota</taxon>
        <taxon>Alphaproteobacteria</taxon>
        <taxon>Rhodobacterales</taxon>
        <taxon>Paracoccaceae</taxon>
        <taxon>Cereibacter</taxon>
    </lineage>
</organism>
<name>METAA_CERS4</name>
<protein>
    <recommendedName>
        <fullName evidence="1">Homoserine O-acetyltransferase</fullName>
        <shortName evidence="1 3">HAT</shortName>
        <ecNumber evidence="1 2">2.3.1.31</ecNumber>
    </recommendedName>
    <alternativeName>
        <fullName evidence="1">Homoserine transacetylase</fullName>
        <shortName evidence="1">HTA</shortName>
    </alternativeName>
</protein>
<evidence type="ECO:0000255" key="1">
    <source>
        <dbReference type="HAMAP-Rule" id="MF_00295"/>
    </source>
</evidence>
<evidence type="ECO:0000269" key="2">
    <source>
    </source>
</evidence>
<evidence type="ECO:0000303" key="3">
    <source>
    </source>
</evidence>
<accession>Q3J205</accession>
<keyword id="KW-0012">Acyltransferase</keyword>
<keyword id="KW-0028">Amino-acid biosynthesis</keyword>
<keyword id="KW-0963">Cytoplasm</keyword>
<keyword id="KW-0486">Methionine biosynthesis</keyword>
<keyword id="KW-1185">Reference proteome</keyword>
<keyword id="KW-0808">Transferase</keyword>